<feature type="chain" id="PRO_0000437799" description="Heavy metal-associated isoprenylated plant protein 5">
    <location>
        <begin position="1"/>
        <end position="383"/>
    </location>
</feature>
<feature type="propeptide" id="PRO_0000437800" description="Removed in mature form" evidence="10">
    <location>
        <begin position="384"/>
        <end position="386"/>
    </location>
</feature>
<feature type="domain" description="HMA 1" evidence="3">
    <location>
        <begin position="49"/>
        <end position="112"/>
    </location>
</feature>
<feature type="domain" description="HMA 2" evidence="3">
    <location>
        <begin position="153"/>
        <end position="220"/>
    </location>
</feature>
<feature type="region of interest" description="Disordered" evidence="4">
    <location>
        <begin position="1"/>
        <end position="40"/>
    </location>
</feature>
<feature type="region of interest" description="Disordered" evidence="4">
    <location>
        <begin position="129"/>
        <end position="153"/>
    </location>
</feature>
<feature type="region of interest" description="Disordered" evidence="4">
    <location>
        <begin position="223"/>
        <end position="301"/>
    </location>
</feature>
<feature type="compositionally biased region" description="Basic and acidic residues" evidence="4">
    <location>
        <begin position="1"/>
        <end position="16"/>
    </location>
</feature>
<feature type="compositionally biased region" description="Basic and acidic residues" evidence="4">
    <location>
        <begin position="130"/>
        <end position="141"/>
    </location>
</feature>
<feature type="compositionally biased region" description="Basic and acidic residues" evidence="4">
    <location>
        <begin position="223"/>
        <end position="245"/>
    </location>
</feature>
<feature type="compositionally biased region" description="Basic and acidic residues" evidence="4">
    <location>
        <begin position="252"/>
        <end position="297"/>
    </location>
</feature>
<feature type="binding site" evidence="3">
    <location>
        <position position="60"/>
    </location>
    <ligand>
        <name>a metal cation</name>
        <dbReference type="ChEBI" id="CHEBI:25213"/>
        <label>1</label>
    </ligand>
</feature>
<feature type="binding site" evidence="3">
    <location>
        <position position="63"/>
    </location>
    <ligand>
        <name>a metal cation</name>
        <dbReference type="ChEBI" id="CHEBI:25213"/>
        <label>1</label>
    </ligand>
</feature>
<feature type="binding site" evidence="3">
    <location>
        <position position="164"/>
    </location>
    <ligand>
        <name>a metal cation</name>
        <dbReference type="ChEBI" id="CHEBI:25213"/>
        <label>2</label>
    </ligand>
</feature>
<feature type="binding site" evidence="3">
    <location>
        <position position="167"/>
    </location>
    <ligand>
        <name>a metal cation</name>
        <dbReference type="ChEBI" id="CHEBI:25213"/>
        <label>2</label>
    </ligand>
</feature>
<feature type="modified residue" description="Cysteine methyl ester" evidence="2">
    <location>
        <position position="383"/>
    </location>
</feature>
<feature type="lipid moiety-binding region" description="S-farnesyl cysteine" evidence="2">
    <location>
        <position position="383"/>
    </location>
</feature>
<feature type="sequence conflict" description="In Ref. 3; AAD09506." evidence="10" ref="3">
    <original>A</original>
    <variation>T</variation>
    <location>
        <position position="150"/>
    </location>
</feature>
<feature type="sequence conflict" description="In Ref. 3; AAD09506." evidence="10" ref="3">
    <original>NKKTEA</original>
    <variation>IRRTER</variation>
    <location>
        <begin position="231"/>
        <end position="236"/>
    </location>
</feature>
<sequence>MGEVQEGPKVEQEKKPAATVVPVETTDGKPKSGGGDSAAAAAPPVAAVVSAFVYKVDMHCEGCAKKIKRMVKHFDGVKDVTADTGGNKLLVVGKIDPVKLQEKLEEKTKRKVVLANPPPKVEGPVAAAVGEKKADGGDKEAAPPAPAPAAPKESVVPLKIRLHCEGCIQKIKKIILKIKGVETVAIDGAKDVVTVKGTIDVKELVPLLTKKLKRTVEPLVPAKKDDGAAENKKTEAAAPDAKKEAPSAGVNEAKKEGSDGGEKKKEVGDGGEKKKEGGDGGEKKKEAGDGGEKKKDGGGVPAPVAMVNKMDYYGYSAYPTAPMHWQEGHVYGQSYSMTGQNYPVGGQSYPGSGYNYASESYVPYAQPNVNAPGMFSDENPNGCSVM</sequence>
<proteinExistence type="evidence at protein level"/>
<comment type="function">
    <text evidence="1 6">Heavy-metal-binding protein (By similarity). Involved in disease resistance (PubMed:12684538).</text>
</comment>
<comment type="induction">
    <text evidence="8">Up-regulated by cadmium.</text>
</comment>
<comment type="PTM">
    <text evidence="5">Efficiently farnesylated in vitro.</text>
</comment>
<comment type="disruption phenotype">
    <text evidence="6">Strongly increased bacterial disease susceptibility.</text>
</comment>
<comment type="similarity">
    <text evidence="10">Belongs to the HIPP family.</text>
</comment>
<comment type="sequence caution" evidence="10">
    <conflict type="miscellaneous discrepancy">
        <sequence resource="EMBL-CDS" id="AAD09506"/>
    </conflict>
</comment>
<keyword id="KW-0449">Lipoprotein</keyword>
<keyword id="KW-0479">Metal-binding</keyword>
<keyword id="KW-0488">Methylation</keyword>
<keyword id="KW-0636">Prenylation</keyword>
<keyword id="KW-1185">Reference proteome</keyword>
<keyword id="KW-0677">Repeat</keyword>
<name>HIP5_ARATH</name>
<accession>Q9SJL2</accession>
<accession>Q9ZRE8</accession>
<reference key="1">
    <citation type="journal article" date="1999" name="Nature">
        <title>Sequence and analysis of chromosome 2 of the plant Arabidopsis thaliana.</title>
        <authorList>
            <person name="Lin X."/>
            <person name="Kaul S."/>
            <person name="Rounsley S.D."/>
            <person name="Shea T.P."/>
            <person name="Benito M.-I."/>
            <person name="Town C.D."/>
            <person name="Fujii C.Y."/>
            <person name="Mason T.M."/>
            <person name="Bowman C.L."/>
            <person name="Barnstead M.E."/>
            <person name="Feldblyum T.V."/>
            <person name="Buell C.R."/>
            <person name="Ketchum K.A."/>
            <person name="Lee J.J."/>
            <person name="Ronning C.M."/>
            <person name="Koo H.L."/>
            <person name="Moffat K.S."/>
            <person name="Cronin L.A."/>
            <person name="Shen M."/>
            <person name="Pai G."/>
            <person name="Van Aken S."/>
            <person name="Umayam L."/>
            <person name="Tallon L.J."/>
            <person name="Gill J.E."/>
            <person name="Adams M.D."/>
            <person name="Carrera A.J."/>
            <person name="Creasy T.H."/>
            <person name="Goodman H.M."/>
            <person name="Somerville C.R."/>
            <person name="Copenhaver G.P."/>
            <person name="Preuss D."/>
            <person name="Nierman W.C."/>
            <person name="White O."/>
            <person name="Eisen J.A."/>
            <person name="Salzberg S.L."/>
            <person name="Fraser C.M."/>
            <person name="Venter J.C."/>
        </authorList>
    </citation>
    <scope>NUCLEOTIDE SEQUENCE [LARGE SCALE GENOMIC DNA]</scope>
    <source>
        <strain>cv. Columbia</strain>
    </source>
</reference>
<reference key="2">
    <citation type="journal article" date="2017" name="Plant J.">
        <title>Araport11: a complete reannotation of the Arabidopsis thaliana reference genome.</title>
        <authorList>
            <person name="Cheng C.Y."/>
            <person name="Krishnakumar V."/>
            <person name="Chan A.P."/>
            <person name="Thibaud-Nissen F."/>
            <person name="Schobel S."/>
            <person name="Town C.D."/>
        </authorList>
    </citation>
    <scope>GENOME REANNOTATION</scope>
    <source>
        <strain>cv. Columbia</strain>
    </source>
</reference>
<reference key="3">
    <citation type="journal article" date="1996" name="Mol. Biotechnol.">
        <title>Identification of cDNAs encoding isoprenylated proteins.</title>
        <authorList>
            <person name="Crowell D.N."/>
            <person name="Biermann B.J."/>
            <person name="Randall S.K."/>
        </authorList>
    </citation>
    <scope>NUCLEOTIDE SEQUENCE [MRNA] OF 142-386</scope>
</reference>
<reference key="4">
    <citation type="journal article" date="1999" name="Plant Mol. Biol.">
        <title>A new class of proteins capable of binding transition metals.</title>
        <authorList>
            <person name="Dykema P.E."/>
            <person name="Sipes P.R."/>
            <person name="Marie A."/>
            <person name="Biermann B.J."/>
            <person name="Crowell D.N."/>
            <person name="Randall S.K."/>
        </authorList>
    </citation>
    <scope>GENE FAMILY</scope>
    <scope>ISOPRENYLATION</scope>
</reference>
<reference key="5">
    <citation type="journal article" date="2003" name="Proc. Natl. Acad. Sci. U.S.A.">
        <title>A network of rice genes associated with stress response and seed development.</title>
        <authorList>
            <person name="Cooper B."/>
            <person name="Clarke J.D."/>
            <person name="Budworth P."/>
            <person name="Kreps J."/>
            <person name="Hutchison D."/>
            <person name="Park S."/>
            <person name="Guimil S."/>
            <person name="Dunn M."/>
            <person name="Luginbuehl P."/>
            <person name="Ellero C."/>
            <person name="Goff S.A."/>
            <person name="Glazebrook J."/>
        </authorList>
    </citation>
    <scope>FUNCTION</scope>
    <scope>DISRUPTION PHENOTYPE</scope>
</reference>
<reference key="6">
    <citation type="journal article" date="2010" name="Metallomics">
        <title>Metallochaperone-like genes in Arabidopsis thaliana.</title>
        <authorList>
            <person name="Tehseen M."/>
            <person name="Cairns N."/>
            <person name="Sherson S."/>
            <person name="Cobbett C.S."/>
        </authorList>
    </citation>
    <scope>GENE FAMILY</scope>
    <scope>NOMENCLATURE</scope>
</reference>
<reference key="7">
    <citation type="journal article" date="2013" name="FEBS J.">
        <title>Heavy metal-associated isoprenylated plant protein (HIPP): characterization of a family of proteins exclusive to plants.</title>
        <authorList>
            <person name="de Abreu-Neto J.B."/>
            <person name="Turchetto-Zolet A.C."/>
            <person name="de Oliveira L.F."/>
            <person name="Zanettini M.H."/>
            <person name="Margis-Pinheiro M."/>
        </authorList>
    </citation>
    <scope>GENE FAMILY</scope>
    <scope>NOMENCLATURE</scope>
    <scope>INDUCTION BY CADMIUM</scope>
</reference>
<gene>
    <name evidence="7 8" type="primary">HIPP05</name>
    <name evidence="9" type="synonym">FP2</name>
    <name evidence="11" type="ordered locus">At2g36950</name>
    <name evidence="12" type="ORF">T1J8.13</name>
</gene>
<evidence type="ECO:0000250" key="1">
    <source>
        <dbReference type="UniProtKB" id="Q9LZF1"/>
    </source>
</evidence>
<evidence type="ECO:0000250" key="2">
    <source>
        <dbReference type="UniProtKB" id="Q9SZN7"/>
    </source>
</evidence>
<evidence type="ECO:0000255" key="3">
    <source>
        <dbReference type="PROSITE-ProRule" id="PRU00280"/>
    </source>
</evidence>
<evidence type="ECO:0000256" key="4">
    <source>
        <dbReference type="SAM" id="MobiDB-lite"/>
    </source>
</evidence>
<evidence type="ECO:0000269" key="5">
    <source>
    </source>
</evidence>
<evidence type="ECO:0000269" key="6">
    <source>
    </source>
</evidence>
<evidence type="ECO:0000303" key="7">
    <source>
    </source>
</evidence>
<evidence type="ECO:0000303" key="8">
    <source>
    </source>
</evidence>
<evidence type="ECO:0000303" key="9">
    <source>
    </source>
</evidence>
<evidence type="ECO:0000305" key="10"/>
<evidence type="ECO:0000312" key="11">
    <source>
        <dbReference type="Araport" id="AT2G36950"/>
    </source>
</evidence>
<evidence type="ECO:0000312" key="12">
    <source>
        <dbReference type="EMBL" id="AAD31580.2"/>
    </source>
</evidence>
<protein>
    <recommendedName>
        <fullName evidence="7 8">Heavy metal-associated isoprenylated plant protein 5</fullName>
        <shortName evidence="7 8">AtHIP05</shortName>
    </recommendedName>
    <alternativeName>
        <fullName evidence="9">Farnesylated protein 2</fullName>
        <shortName evidence="9">AtFP2</shortName>
    </alternativeName>
</protein>
<organism>
    <name type="scientific">Arabidopsis thaliana</name>
    <name type="common">Mouse-ear cress</name>
    <dbReference type="NCBI Taxonomy" id="3702"/>
    <lineage>
        <taxon>Eukaryota</taxon>
        <taxon>Viridiplantae</taxon>
        <taxon>Streptophyta</taxon>
        <taxon>Embryophyta</taxon>
        <taxon>Tracheophyta</taxon>
        <taxon>Spermatophyta</taxon>
        <taxon>Magnoliopsida</taxon>
        <taxon>eudicotyledons</taxon>
        <taxon>Gunneridae</taxon>
        <taxon>Pentapetalae</taxon>
        <taxon>rosids</taxon>
        <taxon>malvids</taxon>
        <taxon>Brassicales</taxon>
        <taxon>Brassicaceae</taxon>
        <taxon>Camelineae</taxon>
        <taxon>Arabidopsis</taxon>
    </lineage>
</organism>
<dbReference type="EMBL" id="AC006922">
    <property type="protein sequence ID" value="AAD31580.2"/>
    <property type="molecule type" value="Genomic_DNA"/>
</dbReference>
<dbReference type="EMBL" id="CP002685">
    <property type="protein sequence ID" value="AEC09325.1"/>
    <property type="molecule type" value="Genomic_DNA"/>
</dbReference>
<dbReference type="EMBL" id="U64905">
    <property type="protein sequence ID" value="AAD09506.1"/>
    <property type="status" value="ALT_SEQ"/>
    <property type="molecule type" value="mRNA"/>
</dbReference>
<dbReference type="PIR" id="F84786">
    <property type="entry name" value="F84786"/>
</dbReference>
<dbReference type="RefSeq" id="NP_565855.1">
    <property type="nucleotide sequence ID" value="NM_129251.3"/>
</dbReference>
<dbReference type="SMR" id="Q9SJL2"/>
<dbReference type="FunCoup" id="Q9SJL2">
    <property type="interactions" value="97"/>
</dbReference>
<dbReference type="IntAct" id="Q9SJL2">
    <property type="interactions" value="1"/>
</dbReference>
<dbReference type="STRING" id="3702.Q9SJL2"/>
<dbReference type="PaxDb" id="3702-AT2G36950.1"/>
<dbReference type="ProteomicsDB" id="230195"/>
<dbReference type="EnsemblPlants" id="AT2G36950.1">
    <property type="protein sequence ID" value="AT2G36950.1"/>
    <property type="gene ID" value="AT2G36950"/>
</dbReference>
<dbReference type="GeneID" id="818269"/>
<dbReference type="Gramene" id="AT2G36950.1">
    <property type="protein sequence ID" value="AT2G36950.1"/>
    <property type="gene ID" value="AT2G36950"/>
</dbReference>
<dbReference type="KEGG" id="ath:AT2G36950"/>
<dbReference type="Araport" id="AT2G36950"/>
<dbReference type="TAIR" id="AT2G36950"/>
<dbReference type="eggNOG" id="KOG1603">
    <property type="taxonomic scope" value="Eukaryota"/>
</dbReference>
<dbReference type="HOGENOM" id="CLU_039886_0_0_1"/>
<dbReference type="InParanoid" id="Q9SJL2"/>
<dbReference type="OMA" id="YPYNVHA"/>
<dbReference type="PhylomeDB" id="Q9SJL2"/>
<dbReference type="PRO" id="PR:Q9SJL2"/>
<dbReference type="Proteomes" id="UP000006548">
    <property type="component" value="Chromosome 2"/>
</dbReference>
<dbReference type="ExpressionAtlas" id="Q9SJL2">
    <property type="expression patterns" value="baseline and differential"/>
</dbReference>
<dbReference type="GO" id="GO:0005507">
    <property type="term" value="F:copper ion binding"/>
    <property type="evidence" value="ECO:0007005"/>
    <property type="project" value="TAIR"/>
</dbReference>
<dbReference type="CDD" id="cd00371">
    <property type="entry name" value="HMA"/>
    <property type="match status" value="1"/>
</dbReference>
<dbReference type="FunFam" id="3.30.70.100:FF:000008">
    <property type="entry name" value="Copper transport protein ATOX1"/>
    <property type="match status" value="1"/>
</dbReference>
<dbReference type="Gene3D" id="3.30.70.100">
    <property type="match status" value="2"/>
</dbReference>
<dbReference type="InterPro" id="IPR044594">
    <property type="entry name" value="HIPP01/3/5/6"/>
</dbReference>
<dbReference type="InterPro" id="IPR006121">
    <property type="entry name" value="HMA_dom"/>
</dbReference>
<dbReference type="InterPro" id="IPR036163">
    <property type="entry name" value="HMA_dom_sf"/>
</dbReference>
<dbReference type="PANTHER" id="PTHR46413:SF24">
    <property type="entry name" value="HEAVY METAL-ASSOCIATED ISOPRENYLATED PLANT PROTEIN 5"/>
    <property type="match status" value="1"/>
</dbReference>
<dbReference type="PANTHER" id="PTHR46413">
    <property type="entry name" value="HEAVY METAL-ASSOCIATED ISOPRENYLATED PLANT PROTEIN 6"/>
    <property type="match status" value="1"/>
</dbReference>
<dbReference type="Pfam" id="PF00403">
    <property type="entry name" value="HMA"/>
    <property type="match status" value="2"/>
</dbReference>
<dbReference type="SUPFAM" id="SSF55008">
    <property type="entry name" value="HMA, heavy metal-associated domain"/>
    <property type="match status" value="2"/>
</dbReference>
<dbReference type="PROSITE" id="PS50846">
    <property type="entry name" value="HMA_2"/>
    <property type="match status" value="2"/>
</dbReference>